<gene>
    <name evidence="1" type="primary">rpsN</name>
    <name type="ordered locus">Swit_1340</name>
</gene>
<dbReference type="EMBL" id="CP000699">
    <property type="protein sequence ID" value="ABQ67705.1"/>
    <property type="molecule type" value="Genomic_DNA"/>
</dbReference>
<dbReference type="SMR" id="A5V5Y9"/>
<dbReference type="STRING" id="392499.Swit_1340"/>
<dbReference type="PaxDb" id="392499-Swit_1340"/>
<dbReference type="KEGG" id="swi:Swit_1340"/>
<dbReference type="eggNOG" id="COG0199">
    <property type="taxonomic scope" value="Bacteria"/>
</dbReference>
<dbReference type="HOGENOM" id="CLU_139869_0_1_5"/>
<dbReference type="OrthoDB" id="9810484at2"/>
<dbReference type="Proteomes" id="UP000001989">
    <property type="component" value="Chromosome"/>
</dbReference>
<dbReference type="GO" id="GO:0005737">
    <property type="term" value="C:cytoplasm"/>
    <property type="evidence" value="ECO:0007669"/>
    <property type="project" value="UniProtKB-ARBA"/>
</dbReference>
<dbReference type="GO" id="GO:0015935">
    <property type="term" value="C:small ribosomal subunit"/>
    <property type="evidence" value="ECO:0007669"/>
    <property type="project" value="TreeGrafter"/>
</dbReference>
<dbReference type="GO" id="GO:0019843">
    <property type="term" value="F:rRNA binding"/>
    <property type="evidence" value="ECO:0007669"/>
    <property type="project" value="UniProtKB-UniRule"/>
</dbReference>
<dbReference type="GO" id="GO:0003735">
    <property type="term" value="F:structural constituent of ribosome"/>
    <property type="evidence" value="ECO:0007669"/>
    <property type="project" value="InterPro"/>
</dbReference>
<dbReference type="GO" id="GO:0006412">
    <property type="term" value="P:translation"/>
    <property type="evidence" value="ECO:0007669"/>
    <property type="project" value="UniProtKB-UniRule"/>
</dbReference>
<dbReference type="FunFam" id="1.10.287.1480:FF:000001">
    <property type="entry name" value="30S ribosomal protein S14"/>
    <property type="match status" value="1"/>
</dbReference>
<dbReference type="Gene3D" id="1.10.287.1480">
    <property type="match status" value="1"/>
</dbReference>
<dbReference type="HAMAP" id="MF_00537">
    <property type="entry name" value="Ribosomal_uS14_1"/>
    <property type="match status" value="1"/>
</dbReference>
<dbReference type="InterPro" id="IPR001209">
    <property type="entry name" value="Ribosomal_uS14"/>
</dbReference>
<dbReference type="InterPro" id="IPR023036">
    <property type="entry name" value="Ribosomal_uS14_bac/plastid"/>
</dbReference>
<dbReference type="InterPro" id="IPR018271">
    <property type="entry name" value="Ribosomal_uS14_CS"/>
</dbReference>
<dbReference type="NCBIfam" id="NF006477">
    <property type="entry name" value="PRK08881.1"/>
    <property type="match status" value="1"/>
</dbReference>
<dbReference type="PANTHER" id="PTHR19836">
    <property type="entry name" value="30S RIBOSOMAL PROTEIN S14"/>
    <property type="match status" value="1"/>
</dbReference>
<dbReference type="PANTHER" id="PTHR19836:SF19">
    <property type="entry name" value="SMALL RIBOSOMAL SUBUNIT PROTEIN US14M"/>
    <property type="match status" value="1"/>
</dbReference>
<dbReference type="Pfam" id="PF00253">
    <property type="entry name" value="Ribosomal_S14"/>
    <property type="match status" value="1"/>
</dbReference>
<dbReference type="SUPFAM" id="SSF57716">
    <property type="entry name" value="Glucocorticoid receptor-like (DNA-binding domain)"/>
    <property type="match status" value="1"/>
</dbReference>
<dbReference type="PROSITE" id="PS00527">
    <property type="entry name" value="RIBOSOMAL_S14"/>
    <property type="match status" value="1"/>
</dbReference>
<protein>
    <recommendedName>
        <fullName evidence="1">Small ribosomal subunit protein uS14</fullName>
    </recommendedName>
    <alternativeName>
        <fullName evidence="2">30S ribosomal protein S14</fullName>
    </alternativeName>
</protein>
<keyword id="KW-1185">Reference proteome</keyword>
<keyword id="KW-0687">Ribonucleoprotein</keyword>
<keyword id="KW-0689">Ribosomal protein</keyword>
<keyword id="KW-0694">RNA-binding</keyword>
<keyword id="KW-0699">rRNA-binding</keyword>
<proteinExistence type="inferred from homology"/>
<reference key="1">
    <citation type="journal article" date="2010" name="J. Bacteriol.">
        <title>Genome sequence of the dioxin-mineralizing bacterium Sphingomonas wittichii RW1.</title>
        <authorList>
            <person name="Miller T.R."/>
            <person name="Delcher A.L."/>
            <person name="Salzberg S.L."/>
            <person name="Saunders E."/>
            <person name="Detter J.C."/>
            <person name="Halden R.U."/>
        </authorList>
    </citation>
    <scope>NUCLEOTIDE SEQUENCE [LARGE SCALE GENOMIC DNA]</scope>
    <source>
        <strain>DSM 6014 / CCUG 31198 / JCM 15750 / NBRC 105917 / EY 4224 / RW1</strain>
    </source>
</reference>
<comment type="function">
    <text evidence="1">Binds 16S rRNA, required for the assembly of 30S particles and may also be responsible for determining the conformation of the 16S rRNA at the A site.</text>
</comment>
<comment type="subunit">
    <text evidence="1">Part of the 30S ribosomal subunit. Contacts proteins S3 and S10.</text>
</comment>
<comment type="similarity">
    <text evidence="1">Belongs to the universal ribosomal protein uS14 family.</text>
</comment>
<accession>A5V5Y9</accession>
<evidence type="ECO:0000255" key="1">
    <source>
        <dbReference type="HAMAP-Rule" id="MF_00537"/>
    </source>
</evidence>
<evidence type="ECO:0000305" key="2"/>
<name>RS14_RHIWR</name>
<organism>
    <name type="scientific">Rhizorhabdus wittichii (strain DSM 6014 / CCUG 31198 / JCM 15750 / NBRC 105917 / EY 4224 / RW1)</name>
    <name type="common">Sphingomonas wittichii</name>
    <dbReference type="NCBI Taxonomy" id="392499"/>
    <lineage>
        <taxon>Bacteria</taxon>
        <taxon>Pseudomonadati</taxon>
        <taxon>Pseudomonadota</taxon>
        <taxon>Alphaproteobacteria</taxon>
        <taxon>Sphingomonadales</taxon>
        <taxon>Sphingomonadaceae</taxon>
        <taxon>Rhizorhabdus</taxon>
    </lineage>
</organism>
<sequence length="101" mass="11702">MAKLSSINKNERRKKLVKAYAGKYARLKAIADDESKDETERLIARLKLAEIPRNANPTRVRNRCEVTGRPRAYYRKFRLCRVQLRDLANKGLIPGVTKSSW</sequence>
<feature type="chain" id="PRO_1000128597" description="Small ribosomal subunit protein uS14">
    <location>
        <begin position="1"/>
        <end position="101"/>
    </location>
</feature>